<organism>
    <name type="scientific">Salmonella enteritidis PT4 (strain P125109)</name>
    <dbReference type="NCBI Taxonomy" id="550537"/>
    <lineage>
        <taxon>Bacteria</taxon>
        <taxon>Pseudomonadati</taxon>
        <taxon>Pseudomonadota</taxon>
        <taxon>Gammaproteobacteria</taxon>
        <taxon>Enterobacterales</taxon>
        <taxon>Enterobacteriaceae</taxon>
        <taxon>Salmonella</taxon>
    </lineage>
</organism>
<feature type="chain" id="PRO_1000129222" description="Succinate--CoA ligase [ADP-forming] subunit beta">
    <location>
        <begin position="1"/>
        <end position="388"/>
    </location>
</feature>
<feature type="domain" description="ATP-grasp" evidence="1">
    <location>
        <begin position="9"/>
        <end position="244"/>
    </location>
</feature>
<feature type="binding site" evidence="1">
    <location>
        <position position="46"/>
    </location>
    <ligand>
        <name>ATP</name>
        <dbReference type="ChEBI" id="CHEBI:30616"/>
    </ligand>
</feature>
<feature type="binding site" evidence="1">
    <location>
        <begin position="53"/>
        <end position="55"/>
    </location>
    <ligand>
        <name>ATP</name>
        <dbReference type="ChEBI" id="CHEBI:30616"/>
    </ligand>
</feature>
<feature type="binding site" evidence="1">
    <location>
        <position position="99"/>
    </location>
    <ligand>
        <name>ATP</name>
        <dbReference type="ChEBI" id="CHEBI:30616"/>
    </ligand>
</feature>
<feature type="binding site" evidence="1">
    <location>
        <position position="102"/>
    </location>
    <ligand>
        <name>ATP</name>
        <dbReference type="ChEBI" id="CHEBI:30616"/>
    </ligand>
</feature>
<feature type="binding site" evidence="1">
    <location>
        <position position="107"/>
    </location>
    <ligand>
        <name>ATP</name>
        <dbReference type="ChEBI" id="CHEBI:30616"/>
    </ligand>
</feature>
<feature type="binding site" evidence="1">
    <location>
        <position position="199"/>
    </location>
    <ligand>
        <name>Mg(2+)</name>
        <dbReference type="ChEBI" id="CHEBI:18420"/>
    </ligand>
</feature>
<feature type="binding site" evidence="1">
    <location>
        <position position="213"/>
    </location>
    <ligand>
        <name>Mg(2+)</name>
        <dbReference type="ChEBI" id="CHEBI:18420"/>
    </ligand>
</feature>
<feature type="binding site" evidence="1">
    <location>
        <position position="264"/>
    </location>
    <ligand>
        <name>substrate</name>
        <note>ligand shared with subunit alpha</note>
    </ligand>
</feature>
<feature type="binding site" evidence="1">
    <location>
        <begin position="321"/>
        <end position="323"/>
    </location>
    <ligand>
        <name>substrate</name>
        <note>ligand shared with subunit alpha</note>
    </ligand>
</feature>
<proteinExistence type="inferred from homology"/>
<protein>
    <recommendedName>
        <fullName evidence="1">Succinate--CoA ligase [ADP-forming] subunit beta</fullName>
        <ecNumber evidence="1">6.2.1.5</ecNumber>
    </recommendedName>
    <alternativeName>
        <fullName evidence="1">Succinyl-CoA synthetase subunit beta</fullName>
        <shortName evidence="1">SCS-beta</shortName>
    </alternativeName>
</protein>
<accession>B5QWG8</accession>
<reference key="1">
    <citation type="journal article" date="2008" name="Genome Res.">
        <title>Comparative genome analysis of Salmonella enteritidis PT4 and Salmonella gallinarum 287/91 provides insights into evolutionary and host adaptation pathways.</title>
        <authorList>
            <person name="Thomson N.R."/>
            <person name="Clayton D.J."/>
            <person name="Windhorst D."/>
            <person name="Vernikos G."/>
            <person name="Davidson S."/>
            <person name="Churcher C."/>
            <person name="Quail M.A."/>
            <person name="Stevens M."/>
            <person name="Jones M.A."/>
            <person name="Watson M."/>
            <person name="Barron A."/>
            <person name="Layton A."/>
            <person name="Pickard D."/>
            <person name="Kingsley R.A."/>
            <person name="Bignell A."/>
            <person name="Clark L."/>
            <person name="Harris B."/>
            <person name="Ormond D."/>
            <person name="Abdellah Z."/>
            <person name="Brooks K."/>
            <person name="Cherevach I."/>
            <person name="Chillingworth T."/>
            <person name="Woodward J."/>
            <person name="Norberczak H."/>
            <person name="Lord A."/>
            <person name="Arrowsmith C."/>
            <person name="Jagels K."/>
            <person name="Moule S."/>
            <person name="Mungall K."/>
            <person name="Saunders M."/>
            <person name="Whitehead S."/>
            <person name="Chabalgoity J.A."/>
            <person name="Maskell D."/>
            <person name="Humphreys T."/>
            <person name="Roberts M."/>
            <person name="Barrow P.A."/>
            <person name="Dougan G."/>
            <person name="Parkhill J."/>
        </authorList>
    </citation>
    <scope>NUCLEOTIDE SEQUENCE [LARGE SCALE GENOMIC DNA]</scope>
    <source>
        <strain>P125109</strain>
    </source>
</reference>
<evidence type="ECO:0000255" key="1">
    <source>
        <dbReference type="HAMAP-Rule" id="MF_00558"/>
    </source>
</evidence>
<name>SUCC_SALEP</name>
<sequence>MNLHEYQAKQLFARYGLPAPVGYACTTPREAEEAASKIGAGPWVVKCQVHAGGRGKAGGVKVVKSKEEIRAFAENWLGKRLVTYQTDANGQPVNQILVEAATDIGKELYLGAVVDRSSRRVVFMASTEGGVEIEKVAEETPHLIHKVALDPLTGPMPYQGRELAFKLGLEGKLVQQFTKIFMGLATIFLERDLALIEINPLVITKQGDLICLDGKLGADGNALFRQPDLREMRDQSQEDPREAQAAQWELNYVALDGNIGCMVNGAGLAMGTMDIVKLHGGEPANFLDVGGGATKERVTEAFKIILSDDNVKAVLVNIFGGIVRCDLIADGIIGAVEEVGVNVPVVVRLEGNNAELGAKKLADSGLNIIAAKSLTDAAQQVVAAVEGK</sequence>
<comment type="function">
    <text evidence="1">Succinyl-CoA synthetase functions in the citric acid cycle (TCA), coupling the hydrolysis of succinyl-CoA to the synthesis of either ATP or GTP and thus represents the only step of substrate-level phosphorylation in the TCA. The beta subunit provides nucleotide specificity of the enzyme and binds the substrate succinate, while the binding sites for coenzyme A and phosphate are found in the alpha subunit.</text>
</comment>
<comment type="catalytic activity">
    <reaction evidence="1">
        <text>succinate + ATP + CoA = succinyl-CoA + ADP + phosphate</text>
        <dbReference type="Rhea" id="RHEA:17661"/>
        <dbReference type="ChEBI" id="CHEBI:30031"/>
        <dbReference type="ChEBI" id="CHEBI:30616"/>
        <dbReference type="ChEBI" id="CHEBI:43474"/>
        <dbReference type="ChEBI" id="CHEBI:57287"/>
        <dbReference type="ChEBI" id="CHEBI:57292"/>
        <dbReference type="ChEBI" id="CHEBI:456216"/>
        <dbReference type="EC" id="6.2.1.5"/>
    </reaction>
    <physiologicalReaction direction="right-to-left" evidence="1">
        <dbReference type="Rhea" id="RHEA:17663"/>
    </physiologicalReaction>
</comment>
<comment type="catalytic activity">
    <reaction evidence="1">
        <text>GTP + succinate + CoA = succinyl-CoA + GDP + phosphate</text>
        <dbReference type="Rhea" id="RHEA:22120"/>
        <dbReference type="ChEBI" id="CHEBI:30031"/>
        <dbReference type="ChEBI" id="CHEBI:37565"/>
        <dbReference type="ChEBI" id="CHEBI:43474"/>
        <dbReference type="ChEBI" id="CHEBI:57287"/>
        <dbReference type="ChEBI" id="CHEBI:57292"/>
        <dbReference type="ChEBI" id="CHEBI:58189"/>
    </reaction>
    <physiologicalReaction direction="right-to-left" evidence="1">
        <dbReference type="Rhea" id="RHEA:22122"/>
    </physiologicalReaction>
</comment>
<comment type="cofactor">
    <cofactor evidence="1">
        <name>Mg(2+)</name>
        <dbReference type="ChEBI" id="CHEBI:18420"/>
    </cofactor>
    <text evidence="1">Binds 1 Mg(2+) ion per subunit.</text>
</comment>
<comment type="pathway">
    <text evidence="1">Carbohydrate metabolism; tricarboxylic acid cycle; succinate from succinyl-CoA (ligase route): step 1/1.</text>
</comment>
<comment type="subunit">
    <text evidence="1">Heterotetramer of two alpha and two beta subunits.</text>
</comment>
<comment type="similarity">
    <text evidence="1">Belongs to the succinate/malate CoA ligase beta subunit family.</text>
</comment>
<gene>
    <name evidence="1" type="primary">sucC</name>
    <name type="ordered locus">SEN0688</name>
</gene>
<dbReference type="EC" id="6.2.1.5" evidence="1"/>
<dbReference type="EMBL" id="AM933172">
    <property type="protein sequence ID" value="CAR32274.1"/>
    <property type="molecule type" value="Genomic_DNA"/>
</dbReference>
<dbReference type="RefSeq" id="WP_001048590.1">
    <property type="nucleotide sequence ID" value="NC_011294.1"/>
</dbReference>
<dbReference type="SMR" id="B5QWG8"/>
<dbReference type="KEGG" id="set:SEN0688"/>
<dbReference type="HOGENOM" id="CLU_037430_4_0_6"/>
<dbReference type="UniPathway" id="UPA00223">
    <property type="reaction ID" value="UER00999"/>
</dbReference>
<dbReference type="Proteomes" id="UP000000613">
    <property type="component" value="Chromosome"/>
</dbReference>
<dbReference type="GO" id="GO:0005829">
    <property type="term" value="C:cytosol"/>
    <property type="evidence" value="ECO:0007669"/>
    <property type="project" value="TreeGrafter"/>
</dbReference>
<dbReference type="GO" id="GO:0042709">
    <property type="term" value="C:succinate-CoA ligase complex"/>
    <property type="evidence" value="ECO:0007669"/>
    <property type="project" value="TreeGrafter"/>
</dbReference>
<dbReference type="GO" id="GO:0005524">
    <property type="term" value="F:ATP binding"/>
    <property type="evidence" value="ECO:0007669"/>
    <property type="project" value="UniProtKB-UniRule"/>
</dbReference>
<dbReference type="GO" id="GO:0000287">
    <property type="term" value="F:magnesium ion binding"/>
    <property type="evidence" value="ECO:0007669"/>
    <property type="project" value="UniProtKB-UniRule"/>
</dbReference>
<dbReference type="GO" id="GO:0004775">
    <property type="term" value="F:succinate-CoA ligase (ADP-forming) activity"/>
    <property type="evidence" value="ECO:0007669"/>
    <property type="project" value="UniProtKB-UniRule"/>
</dbReference>
<dbReference type="GO" id="GO:0004776">
    <property type="term" value="F:succinate-CoA ligase (GDP-forming) activity"/>
    <property type="evidence" value="ECO:0007669"/>
    <property type="project" value="RHEA"/>
</dbReference>
<dbReference type="GO" id="GO:0006104">
    <property type="term" value="P:succinyl-CoA metabolic process"/>
    <property type="evidence" value="ECO:0007669"/>
    <property type="project" value="TreeGrafter"/>
</dbReference>
<dbReference type="GO" id="GO:0006099">
    <property type="term" value="P:tricarboxylic acid cycle"/>
    <property type="evidence" value="ECO:0007669"/>
    <property type="project" value="UniProtKB-UniRule"/>
</dbReference>
<dbReference type="FunFam" id="3.30.1490.20:FF:000002">
    <property type="entry name" value="Succinate--CoA ligase [ADP-forming] subunit beta"/>
    <property type="match status" value="1"/>
</dbReference>
<dbReference type="FunFam" id="3.30.470.20:FF:000002">
    <property type="entry name" value="Succinate--CoA ligase [ADP-forming] subunit beta"/>
    <property type="match status" value="1"/>
</dbReference>
<dbReference type="FunFam" id="3.40.50.261:FF:000001">
    <property type="entry name" value="Succinate--CoA ligase [ADP-forming] subunit beta"/>
    <property type="match status" value="1"/>
</dbReference>
<dbReference type="Gene3D" id="3.30.1490.20">
    <property type="entry name" value="ATP-grasp fold, A domain"/>
    <property type="match status" value="1"/>
</dbReference>
<dbReference type="Gene3D" id="3.30.470.20">
    <property type="entry name" value="ATP-grasp fold, B domain"/>
    <property type="match status" value="1"/>
</dbReference>
<dbReference type="Gene3D" id="3.40.50.261">
    <property type="entry name" value="Succinyl-CoA synthetase domains"/>
    <property type="match status" value="1"/>
</dbReference>
<dbReference type="HAMAP" id="MF_00558">
    <property type="entry name" value="Succ_CoA_beta"/>
    <property type="match status" value="1"/>
</dbReference>
<dbReference type="InterPro" id="IPR011761">
    <property type="entry name" value="ATP-grasp"/>
</dbReference>
<dbReference type="InterPro" id="IPR013650">
    <property type="entry name" value="ATP-grasp_succ-CoA_synth-type"/>
</dbReference>
<dbReference type="InterPro" id="IPR013815">
    <property type="entry name" value="ATP_grasp_subdomain_1"/>
</dbReference>
<dbReference type="InterPro" id="IPR017866">
    <property type="entry name" value="Succ-CoA_synthase_bsu_CS"/>
</dbReference>
<dbReference type="InterPro" id="IPR005811">
    <property type="entry name" value="SUCC_ACL_C"/>
</dbReference>
<dbReference type="InterPro" id="IPR005809">
    <property type="entry name" value="Succ_CoA_ligase-like_bsu"/>
</dbReference>
<dbReference type="InterPro" id="IPR016102">
    <property type="entry name" value="Succinyl-CoA_synth-like"/>
</dbReference>
<dbReference type="NCBIfam" id="NF001913">
    <property type="entry name" value="PRK00696.1"/>
    <property type="match status" value="1"/>
</dbReference>
<dbReference type="NCBIfam" id="TIGR01016">
    <property type="entry name" value="sucCoAbeta"/>
    <property type="match status" value="1"/>
</dbReference>
<dbReference type="PANTHER" id="PTHR11815:SF10">
    <property type="entry name" value="SUCCINATE--COA LIGASE [GDP-FORMING] SUBUNIT BETA, MITOCHONDRIAL"/>
    <property type="match status" value="1"/>
</dbReference>
<dbReference type="PANTHER" id="PTHR11815">
    <property type="entry name" value="SUCCINYL-COA SYNTHETASE BETA CHAIN"/>
    <property type="match status" value="1"/>
</dbReference>
<dbReference type="Pfam" id="PF08442">
    <property type="entry name" value="ATP-grasp_2"/>
    <property type="match status" value="1"/>
</dbReference>
<dbReference type="Pfam" id="PF00549">
    <property type="entry name" value="Ligase_CoA"/>
    <property type="match status" value="1"/>
</dbReference>
<dbReference type="PIRSF" id="PIRSF001554">
    <property type="entry name" value="SucCS_beta"/>
    <property type="match status" value="1"/>
</dbReference>
<dbReference type="SUPFAM" id="SSF56059">
    <property type="entry name" value="Glutathione synthetase ATP-binding domain-like"/>
    <property type="match status" value="1"/>
</dbReference>
<dbReference type="SUPFAM" id="SSF52210">
    <property type="entry name" value="Succinyl-CoA synthetase domains"/>
    <property type="match status" value="1"/>
</dbReference>
<dbReference type="PROSITE" id="PS50975">
    <property type="entry name" value="ATP_GRASP"/>
    <property type="match status" value="1"/>
</dbReference>
<dbReference type="PROSITE" id="PS01217">
    <property type="entry name" value="SUCCINYL_COA_LIG_3"/>
    <property type="match status" value="1"/>
</dbReference>
<keyword id="KW-0067">ATP-binding</keyword>
<keyword id="KW-0436">Ligase</keyword>
<keyword id="KW-0460">Magnesium</keyword>
<keyword id="KW-0479">Metal-binding</keyword>
<keyword id="KW-0547">Nucleotide-binding</keyword>
<keyword id="KW-0816">Tricarboxylic acid cycle</keyword>